<accession>Q5PEA9</accession>
<reference key="1">
    <citation type="journal article" date="2004" name="Nat. Genet.">
        <title>Comparison of genome degradation in Paratyphi A and Typhi, human-restricted serovars of Salmonella enterica that cause typhoid.</title>
        <authorList>
            <person name="McClelland M."/>
            <person name="Sanderson K.E."/>
            <person name="Clifton S.W."/>
            <person name="Latreille P."/>
            <person name="Porwollik S."/>
            <person name="Sabo A."/>
            <person name="Meyer R."/>
            <person name="Bieri T."/>
            <person name="Ozersky P."/>
            <person name="McLellan M."/>
            <person name="Harkins C.R."/>
            <person name="Wang C."/>
            <person name="Nguyen C."/>
            <person name="Berghoff A."/>
            <person name="Elliott G."/>
            <person name="Kohlberg S."/>
            <person name="Strong C."/>
            <person name="Du F."/>
            <person name="Carter J."/>
            <person name="Kremizki C."/>
            <person name="Layman D."/>
            <person name="Leonard S."/>
            <person name="Sun H."/>
            <person name="Fulton L."/>
            <person name="Nash W."/>
            <person name="Miner T."/>
            <person name="Minx P."/>
            <person name="Delehaunty K."/>
            <person name="Fronick C."/>
            <person name="Magrini V."/>
            <person name="Nhan M."/>
            <person name="Warren W."/>
            <person name="Florea L."/>
            <person name="Spieth J."/>
            <person name="Wilson R.K."/>
        </authorList>
    </citation>
    <scope>NUCLEOTIDE SEQUENCE [LARGE SCALE GENOMIC DNA]</scope>
    <source>
        <strain>ATCC 9150 / SARB42</strain>
    </source>
</reference>
<dbReference type="EC" id="3.1.3.48"/>
<dbReference type="EMBL" id="CP000026">
    <property type="protein sequence ID" value="AAV78593.1"/>
    <property type="molecule type" value="Genomic_DNA"/>
</dbReference>
<dbReference type="RefSeq" id="WP_000946993.1">
    <property type="nucleotide sequence ID" value="NC_006511.1"/>
</dbReference>
<dbReference type="SMR" id="Q5PEA9"/>
<dbReference type="KEGG" id="spt:SPA2736"/>
<dbReference type="HOGENOM" id="CLU_039619_0_0_6"/>
<dbReference type="Proteomes" id="UP000008185">
    <property type="component" value="Chromosome"/>
</dbReference>
<dbReference type="GO" id="GO:0005615">
    <property type="term" value="C:extracellular space"/>
    <property type="evidence" value="ECO:0007669"/>
    <property type="project" value="InterPro"/>
</dbReference>
<dbReference type="GO" id="GO:0030430">
    <property type="term" value="C:host cell cytoplasm"/>
    <property type="evidence" value="ECO:0007669"/>
    <property type="project" value="UniProtKB-SubCell"/>
</dbReference>
<dbReference type="GO" id="GO:0005096">
    <property type="term" value="F:GTPase activator activity"/>
    <property type="evidence" value="ECO:0007669"/>
    <property type="project" value="UniProtKB-KW"/>
</dbReference>
<dbReference type="GO" id="GO:0004725">
    <property type="term" value="F:protein tyrosine phosphatase activity"/>
    <property type="evidence" value="ECO:0007669"/>
    <property type="project" value="UniProtKB-EC"/>
</dbReference>
<dbReference type="CDD" id="cd14559">
    <property type="entry name" value="PTP_YopH-like"/>
    <property type="match status" value="1"/>
</dbReference>
<dbReference type="CDD" id="cd00219">
    <property type="entry name" value="ToxGAP"/>
    <property type="match status" value="1"/>
</dbReference>
<dbReference type="Gene3D" id="4.10.1330.10">
    <property type="entry name" value="non globular Virulence effector SptP domain"/>
    <property type="match status" value="1"/>
</dbReference>
<dbReference type="Gene3D" id="3.90.190.10">
    <property type="entry name" value="Protein tyrosine phosphatase superfamily"/>
    <property type="match status" value="1"/>
</dbReference>
<dbReference type="Gene3D" id="1.20.120.260">
    <property type="entry name" value="Virulence factor YopE uncharacterised domain"/>
    <property type="match status" value="1"/>
</dbReference>
<dbReference type="InterPro" id="IPR011070">
    <property type="entry name" value="Globular_prot_asu/bsu"/>
</dbReference>
<dbReference type="InterPro" id="IPR029021">
    <property type="entry name" value="Prot-tyrosine_phosphatase-like"/>
</dbReference>
<dbReference type="InterPro" id="IPR000242">
    <property type="entry name" value="PTP_cat"/>
</dbReference>
<dbReference type="InterPro" id="IPR015203">
    <property type="entry name" value="SptP_N"/>
</dbReference>
<dbReference type="InterPro" id="IPR044899">
    <property type="entry name" value="SptP_N_sf"/>
</dbReference>
<dbReference type="InterPro" id="IPR016130">
    <property type="entry name" value="Tyr_Pase_AS"/>
</dbReference>
<dbReference type="InterPro" id="IPR003595">
    <property type="entry name" value="Tyr_Pase_cat"/>
</dbReference>
<dbReference type="InterPro" id="IPR000387">
    <property type="entry name" value="Tyr_Pase_dom"/>
</dbReference>
<dbReference type="InterPro" id="IPR003546">
    <property type="entry name" value="Tyr_Pase_SptP/YopH"/>
</dbReference>
<dbReference type="InterPro" id="IPR014773">
    <property type="entry name" value="YopE_GAP_dom"/>
</dbReference>
<dbReference type="InterPro" id="IPR037168">
    <property type="entry name" value="YopE_GAP_dom_sf"/>
</dbReference>
<dbReference type="NCBIfam" id="NF011902">
    <property type="entry name" value="PRK15375.1"/>
    <property type="match status" value="1"/>
</dbReference>
<dbReference type="Pfam" id="PF09119">
    <property type="entry name" value="SicP-binding"/>
    <property type="match status" value="1"/>
</dbReference>
<dbReference type="Pfam" id="PF00102">
    <property type="entry name" value="Y_phosphatase"/>
    <property type="match status" value="1"/>
</dbReference>
<dbReference type="Pfam" id="PF03545">
    <property type="entry name" value="YopE"/>
    <property type="match status" value="1"/>
</dbReference>
<dbReference type="PRINTS" id="PR01371">
    <property type="entry name" value="BACYPHPHTASE"/>
</dbReference>
<dbReference type="SMART" id="SM00194">
    <property type="entry name" value="PTPc"/>
    <property type="match status" value="1"/>
</dbReference>
<dbReference type="SMART" id="SM00404">
    <property type="entry name" value="PTPc_motif"/>
    <property type="match status" value="1"/>
</dbReference>
<dbReference type="SUPFAM" id="SSF52799">
    <property type="entry name" value="(Phosphotyrosine protein) phosphatases II"/>
    <property type="match status" value="1"/>
</dbReference>
<dbReference type="SUPFAM" id="SSF47233">
    <property type="entry name" value="Bacterial GAP domain"/>
    <property type="match status" value="1"/>
</dbReference>
<dbReference type="SUPFAM" id="SSF56568">
    <property type="entry name" value="Non-globular alpha+beta subunits of globular proteins"/>
    <property type="match status" value="1"/>
</dbReference>
<dbReference type="PROSITE" id="PS52059">
    <property type="entry name" value="BACT_RHOGAP"/>
    <property type="match status" value="1"/>
</dbReference>
<dbReference type="PROSITE" id="PS00383">
    <property type="entry name" value="TYR_PHOSPHATASE_1"/>
    <property type="match status" value="1"/>
</dbReference>
<dbReference type="PROSITE" id="PS50056">
    <property type="entry name" value="TYR_PHOSPHATASE_2"/>
    <property type="match status" value="1"/>
</dbReference>
<dbReference type="PROSITE" id="PS50055">
    <property type="entry name" value="TYR_PHOSPHATASE_PTP"/>
    <property type="match status" value="1"/>
</dbReference>
<proteinExistence type="inferred from homology"/>
<sequence>MLRYEERKLNNLTLSSFSKSGVSSDTRLYIAKENTDKAYVAPEKFSSKVLTWLGKMPLFKNTEVVQKHTENIRVQNQKILQTFLQALTEKYGEKAVNNALYMSSINMNKPLTQRLVVQITECVKGADGGFINIIKNKDNVGVMNAALVIKGGDTKVTEQNNDVGAESKQPLLDIALKGLKRTIPQLEQMDGNSLRENFQEMASGNGPLRSLMTNLQSLNKIPEAKQLNDYVTTLKNIQIGADRFSQWGTCGGEVERWIDKASTHELTQAVKKIHVIAKELKNVTAEFEKIKAGASMPQTMNGPTLGLARFAVSSIPINQQTQVKLSDGMPVPVNTLTFDGKPVALAGSYPKNTPDALEAHMKMLLEKECSCLAVLTSEDQMQAKQLPAYFRGSYTFGEVHTNSQKVSSASQGGAIDQYNMQLSCGEKRYTIPVLHVKNWPDHQPLPSTDQLEYLADRVKNSNQNGAPGRSSSDKHLPMIHCLGGVGRTGTMAAALVLKDNPHSNLEQVRADFRNSRNNRMLEDASQFVQLKAMQAQLLMTTAS</sequence>
<organism>
    <name type="scientific">Salmonella paratyphi A (strain ATCC 9150 / SARB42)</name>
    <dbReference type="NCBI Taxonomy" id="295319"/>
    <lineage>
        <taxon>Bacteria</taxon>
        <taxon>Pseudomonadati</taxon>
        <taxon>Pseudomonadota</taxon>
        <taxon>Gammaproteobacteria</taxon>
        <taxon>Enterobacterales</taxon>
        <taxon>Enterobacteriaceae</taxon>
        <taxon>Salmonella</taxon>
    </lineage>
</organism>
<protein>
    <recommendedName>
        <fullName>Secreted effector protein SptP</fullName>
    </recommendedName>
    <domain>
        <recommendedName>
            <fullName>GTPase-activating protein</fullName>
            <shortName>GAP</shortName>
        </recommendedName>
    </domain>
    <domain>
        <recommendedName>
            <fullName>Tyrosine-protein phosphatase</fullName>
            <ecNumber>3.1.3.48</ecNumber>
        </recommendedName>
    </domain>
</protein>
<gene>
    <name type="primary">sptP</name>
    <name type="ordered locus">SPA2736</name>
</gene>
<name>SPTP_SALPA</name>
<keyword id="KW-0343">GTPase activation</keyword>
<keyword id="KW-1035">Host cytoplasm</keyword>
<keyword id="KW-0378">Hydrolase</keyword>
<keyword id="KW-0904">Protein phosphatase</keyword>
<keyword id="KW-0964">Secreted</keyword>
<keyword id="KW-0843">Virulence</keyword>
<evidence type="ECO:0000250" key="1"/>
<evidence type="ECO:0000255" key="2">
    <source>
        <dbReference type="PROSITE-ProRule" id="PRU00160"/>
    </source>
</evidence>
<evidence type="ECO:0000255" key="3">
    <source>
        <dbReference type="PROSITE-ProRule" id="PRU01404"/>
    </source>
</evidence>
<evidence type="ECO:0000255" key="4">
    <source>
        <dbReference type="PROSITE-ProRule" id="PRU10044"/>
    </source>
</evidence>
<comment type="function">
    <text evidence="1">Effector proteins function to alter host cell physiology and promote bacterial survival in host tissues. This protein includes tyrosine phosphatase and GTPase activating protein (GAP) activities. After bacterial internalization, GAP mediates the reversal of the cytoskeletal changes induced by SopE. This function is independent of its tyrosine phosphatase activity, which remains unclear (By similarity).</text>
</comment>
<comment type="catalytic activity">
    <reaction evidence="4">
        <text>O-phospho-L-tyrosyl-[protein] + H2O = L-tyrosyl-[protein] + phosphate</text>
        <dbReference type="Rhea" id="RHEA:10684"/>
        <dbReference type="Rhea" id="RHEA-COMP:10136"/>
        <dbReference type="Rhea" id="RHEA-COMP:20101"/>
        <dbReference type="ChEBI" id="CHEBI:15377"/>
        <dbReference type="ChEBI" id="CHEBI:43474"/>
        <dbReference type="ChEBI" id="CHEBI:46858"/>
        <dbReference type="ChEBI" id="CHEBI:61978"/>
        <dbReference type="EC" id="3.1.3.48"/>
    </reaction>
</comment>
<comment type="subunit">
    <text evidence="1">Forms a complex with SicP.</text>
</comment>
<comment type="subcellular location">
    <subcellularLocation>
        <location evidence="1">Secreted</location>
    </subcellularLocation>
    <subcellularLocation>
        <location evidence="1">Host cytoplasm</location>
    </subcellularLocation>
    <text evidence="1">Secreted via type III secretion system 1 (SPI-1 T3SS), and delivered into the host cytoplasm.</text>
</comment>
<comment type="miscellaneous">
    <text evidence="1">Requires SicP as a chaperone for its stability and secretion.</text>
</comment>
<feature type="chain" id="PRO_0000094864" description="Secreted effector protein SptP">
    <location>
        <begin position="1"/>
        <end position="543"/>
    </location>
</feature>
<feature type="domain" description="Bacterial Rho-GAP" evidence="3">
    <location>
        <begin position="162"/>
        <end position="293"/>
    </location>
</feature>
<feature type="domain" description="Tyrosine-protein phosphatase" evidence="2">
    <location>
        <begin position="315"/>
        <end position="543"/>
    </location>
</feature>
<feature type="region of interest" description="Chaperone-binding" evidence="1">
    <location>
        <begin position="35"/>
        <end position="139"/>
    </location>
</feature>
<feature type="active site" description="Phosphocysteine intermediate" evidence="2 4">
    <location>
        <position position="481"/>
    </location>
</feature>
<feature type="site" description="Arginine finger; crucial for GTP hydrolysis by stabilizing the transition state" evidence="3">
    <location>
        <position position="209"/>
    </location>
</feature>